<proteinExistence type="inferred from homology"/>
<sequence length="83" mass="9220">MASNASADVTTMTFERAIEELESIVKRLEDGKVPLEESVAIYERGETLKRRCEELLRQAEARVDKITTDANGAPVGTEPLDVR</sequence>
<organism>
    <name type="scientific">Afipia carboxidovorans (strain ATCC 49405 / DSM 1227 / KCTC 32145 / OM5)</name>
    <name type="common">Oligotropha carboxidovorans</name>
    <dbReference type="NCBI Taxonomy" id="504832"/>
    <lineage>
        <taxon>Bacteria</taxon>
        <taxon>Pseudomonadati</taxon>
        <taxon>Pseudomonadota</taxon>
        <taxon>Alphaproteobacteria</taxon>
        <taxon>Hyphomicrobiales</taxon>
        <taxon>Nitrobacteraceae</taxon>
        <taxon>Afipia</taxon>
    </lineage>
</organism>
<keyword id="KW-0963">Cytoplasm</keyword>
<keyword id="KW-0269">Exonuclease</keyword>
<keyword id="KW-0378">Hydrolase</keyword>
<keyword id="KW-0540">Nuclease</keyword>
<keyword id="KW-1185">Reference proteome</keyword>
<evidence type="ECO:0000255" key="1">
    <source>
        <dbReference type="HAMAP-Rule" id="MF_00337"/>
    </source>
</evidence>
<comment type="function">
    <text evidence="1">Bidirectionally degrades single-stranded DNA into large acid-insoluble oligonucleotides, which are then degraded further into small acid-soluble oligonucleotides.</text>
</comment>
<comment type="catalytic activity">
    <reaction evidence="1">
        <text>Exonucleolytic cleavage in either 5'- to 3'- or 3'- to 5'-direction to yield nucleoside 5'-phosphates.</text>
        <dbReference type="EC" id="3.1.11.6"/>
    </reaction>
</comment>
<comment type="subunit">
    <text evidence="1">Heterooligomer composed of large and small subunits.</text>
</comment>
<comment type="subcellular location">
    <subcellularLocation>
        <location evidence="1">Cytoplasm</location>
    </subcellularLocation>
</comment>
<comment type="similarity">
    <text evidence="1">Belongs to the XseB family.</text>
</comment>
<gene>
    <name evidence="1" type="primary">xseB</name>
    <name type="ordered locus">OCAR_6894</name>
    <name type="ordered locus">OCA5_c11870</name>
</gene>
<dbReference type="EC" id="3.1.11.6" evidence="1"/>
<dbReference type="EMBL" id="CP001196">
    <property type="protein sequence ID" value="ACI94003.1"/>
    <property type="molecule type" value="Genomic_DNA"/>
</dbReference>
<dbReference type="EMBL" id="CP002826">
    <property type="protein sequence ID" value="AEI05905.1"/>
    <property type="molecule type" value="Genomic_DNA"/>
</dbReference>
<dbReference type="RefSeq" id="WP_012564029.1">
    <property type="nucleotide sequence ID" value="NC_015684.1"/>
</dbReference>
<dbReference type="SMR" id="B6JFI3"/>
<dbReference type="STRING" id="504832.OCA5_c11870"/>
<dbReference type="KEGG" id="oca:OCAR_6894"/>
<dbReference type="KEGG" id="ocg:OCA5_c11870"/>
<dbReference type="PATRIC" id="fig|504832.7.peg.1262"/>
<dbReference type="eggNOG" id="COG1722">
    <property type="taxonomic scope" value="Bacteria"/>
</dbReference>
<dbReference type="HOGENOM" id="CLU_145918_0_3_5"/>
<dbReference type="OrthoDB" id="9808145at2"/>
<dbReference type="Proteomes" id="UP000007730">
    <property type="component" value="Chromosome"/>
</dbReference>
<dbReference type="GO" id="GO:0005829">
    <property type="term" value="C:cytosol"/>
    <property type="evidence" value="ECO:0007669"/>
    <property type="project" value="TreeGrafter"/>
</dbReference>
<dbReference type="GO" id="GO:0009318">
    <property type="term" value="C:exodeoxyribonuclease VII complex"/>
    <property type="evidence" value="ECO:0007669"/>
    <property type="project" value="InterPro"/>
</dbReference>
<dbReference type="GO" id="GO:0008855">
    <property type="term" value="F:exodeoxyribonuclease VII activity"/>
    <property type="evidence" value="ECO:0007669"/>
    <property type="project" value="UniProtKB-UniRule"/>
</dbReference>
<dbReference type="GO" id="GO:0006308">
    <property type="term" value="P:DNA catabolic process"/>
    <property type="evidence" value="ECO:0007669"/>
    <property type="project" value="UniProtKB-UniRule"/>
</dbReference>
<dbReference type="FunFam" id="1.10.287.1040:FF:000004">
    <property type="entry name" value="Exodeoxyribonuclease 7 small subunit"/>
    <property type="match status" value="1"/>
</dbReference>
<dbReference type="Gene3D" id="1.10.287.1040">
    <property type="entry name" value="Exonuclease VII, small subunit"/>
    <property type="match status" value="1"/>
</dbReference>
<dbReference type="HAMAP" id="MF_00337">
    <property type="entry name" value="Exonuc_7_S"/>
    <property type="match status" value="1"/>
</dbReference>
<dbReference type="InterPro" id="IPR003761">
    <property type="entry name" value="Exonuc_VII_S"/>
</dbReference>
<dbReference type="InterPro" id="IPR037004">
    <property type="entry name" value="Exonuc_VII_ssu_sf"/>
</dbReference>
<dbReference type="NCBIfam" id="NF002139">
    <property type="entry name" value="PRK00977.1-3"/>
    <property type="match status" value="1"/>
</dbReference>
<dbReference type="NCBIfam" id="TIGR01280">
    <property type="entry name" value="xseB"/>
    <property type="match status" value="1"/>
</dbReference>
<dbReference type="PANTHER" id="PTHR34137">
    <property type="entry name" value="EXODEOXYRIBONUCLEASE 7 SMALL SUBUNIT"/>
    <property type="match status" value="1"/>
</dbReference>
<dbReference type="PANTHER" id="PTHR34137:SF1">
    <property type="entry name" value="EXODEOXYRIBONUCLEASE 7 SMALL SUBUNIT"/>
    <property type="match status" value="1"/>
</dbReference>
<dbReference type="Pfam" id="PF02609">
    <property type="entry name" value="Exonuc_VII_S"/>
    <property type="match status" value="1"/>
</dbReference>
<dbReference type="PIRSF" id="PIRSF006488">
    <property type="entry name" value="Exonuc_VII_S"/>
    <property type="match status" value="1"/>
</dbReference>
<dbReference type="SUPFAM" id="SSF116842">
    <property type="entry name" value="XseB-like"/>
    <property type="match status" value="1"/>
</dbReference>
<protein>
    <recommendedName>
        <fullName evidence="1">Exodeoxyribonuclease 7 small subunit</fullName>
        <ecNumber evidence="1">3.1.11.6</ecNumber>
    </recommendedName>
    <alternativeName>
        <fullName evidence="1">Exodeoxyribonuclease VII small subunit</fullName>
        <shortName evidence="1">Exonuclease VII small subunit</shortName>
    </alternativeName>
</protein>
<name>EX7S_AFIC5</name>
<reference key="1">
    <citation type="journal article" date="2008" name="J. Bacteriol.">
        <title>Genome sequence of the chemolithoautotrophic bacterium Oligotropha carboxidovorans OM5T.</title>
        <authorList>
            <person name="Paul D."/>
            <person name="Bridges S."/>
            <person name="Burgess S.C."/>
            <person name="Dandass Y."/>
            <person name="Lawrence M.L."/>
        </authorList>
    </citation>
    <scope>NUCLEOTIDE SEQUENCE [LARGE SCALE GENOMIC DNA]</scope>
    <source>
        <strain>ATCC 49405 / DSM 1227 / KCTC 32145 / OM5</strain>
    </source>
</reference>
<reference key="2">
    <citation type="journal article" date="2011" name="J. Bacteriol.">
        <title>Complete genome sequences of the chemolithoautotrophic Oligotropha carboxidovorans strains OM4 and OM5.</title>
        <authorList>
            <person name="Volland S."/>
            <person name="Rachinger M."/>
            <person name="Strittmatter A."/>
            <person name="Daniel R."/>
            <person name="Gottschalk G."/>
            <person name="Meyer O."/>
        </authorList>
    </citation>
    <scope>NUCLEOTIDE SEQUENCE [LARGE SCALE GENOMIC DNA]</scope>
    <source>
        <strain>ATCC 49405 / DSM 1227 / KCTC 32145 / OM5</strain>
    </source>
</reference>
<feature type="chain" id="PRO_1000119942" description="Exodeoxyribonuclease 7 small subunit">
    <location>
        <begin position="1"/>
        <end position="83"/>
    </location>
</feature>
<accession>B6JFI3</accession>
<accession>F8BUV6</accession>